<keyword id="KW-0025">Alternative splicing</keyword>
<keyword id="KW-0963">Cytoplasm</keyword>
<keyword id="KW-0597">Phosphoprotein</keyword>
<keyword id="KW-1267">Proteomics identification</keyword>
<keyword id="KW-1185">Reference proteome</keyword>
<organism>
    <name type="scientific">Homo sapiens</name>
    <name type="common">Human</name>
    <dbReference type="NCBI Taxonomy" id="9606"/>
    <lineage>
        <taxon>Eukaryota</taxon>
        <taxon>Metazoa</taxon>
        <taxon>Chordata</taxon>
        <taxon>Craniata</taxon>
        <taxon>Vertebrata</taxon>
        <taxon>Euteleostomi</taxon>
        <taxon>Mammalia</taxon>
        <taxon>Eutheria</taxon>
        <taxon>Euarchontoglires</taxon>
        <taxon>Primates</taxon>
        <taxon>Haplorrhini</taxon>
        <taxon>Catarrhini</taxon>
        <taxon>Hominidae</taxon>
        <taxon>Homo</taxon>
    </lineage>
</organism>
<proteinExistence type="evidence at protein level"/>
<accession>O75363</accession>
<accession>A0AVG5</accession>
<accession>Q68CZ3</accession>
<protein>
    <recommendedName>
        <fullName>Breast carcinoma-amplified sequence 1</fullName>
    </recommendedName>
    <alternativeName>
        <fullName>Amplified and overexpressed in breast cancer</fullName>
    </alternativeName>
    <alternativeName>
        <fullName>Novel amplified in breast cancer 1</fullName>
    </alternativeName>
</protein>
<gene>
    <name type="primary">BCAS1</name>
    <name type="synonym">AIBC1</name>
    <name type="synonym">NABC1</name>
</gene>
<comment type="function">
    <text evidence="2">Required for myelination.</text>
</comment>
<comment type="subunit">
    <text evidence="1 5">Homodimer (PubMed:14567997). Interacts with DYNLL1 and DYNLL2 (By similarity).</text>
</comment>
<comment type="subcellular location">
    <subcellularLocation>
        <location evidence="5">Cytoplasm</location>
    </subcellularLocation>
</comment>
<comment type="alternative products">
    <event type="alternative splicing"/>
    <isoform>
        <id>O75363-1</id>
        <name>1</name>
        <sequence type="displayed"/>
    </isoform>
    <isoform>
        <id>O75363-2</id>
        <name>2</name>
        <name>5B</name>
        <sequence type="described" ref="VSP_018520 VSP_018521 VSP_018522 VSP_018523"/>
    </isoform>
</comment>
<comment type="tissue specificity">
    <text evidence="4 5 6">Highly expressed in the brain and, more specifically, in oligodendrocytes (at protein level). Expressed in the prostate, and at lower levels in testis, intestine and colon. Overexpressed in most breast cancer cell lines and down-regulated in some colorectal tumors.</text>
</comment>
<dbReference type="EMBL" id="AF041260">
    <property type="protein sequence ID" value="AAC39896.1"/>
    <property type="molecule type" value="mRNA"/>
</dbReference>
<dbReference type="EMBL" id="AC004501">
    <property type="status" value="NOT_ANNOTATED_CDS"/>
    <property type="molecule type" value="Genomic_DNA"/>
</dbReference>
<dbReference type="EMBL" id="AC005220">
    <property type="status" value="NOT_ANNOTATED_CDS"/>
    <property type="molecule type" value="Genomic_DNA"/>
</dbReference>
<dbReference type="EMBL" id="BC126346">
    <property type="protein sequence ID" value="AAI26347.1"/>
    <property type="molecule type" value="mRNA"/>
</dbReference>
<dbReference type="EMBL" id="AI904532">
    <property type="status" value="NOT_ANNOTATED_CDS"/>
    <property type="molecule type" value="mRNA"/>
</dbReference>
<dbReference type="EMBL" id="CR749643">
    <property type="protein sequence ID" value="CAH18437.1"/>
    <property type="molecule type" value="mRNA"/>
</dbReference>
<dbReference type="CCDS" id="CCDS13444.1">
    <molecule id="O75363-1"/>
</dbReference>
<dbReference type="RefSeq" id="NP_003648.2">
    <molecule id="O75363-1"/>
    <property type="nucleotide sequence ID" value="NM_003657.4"/>
</dbReference>
<dbReference type="RefSeq" id="XP_047296522.1">
    <molecule id="O75363-1"/>
    <property type="nucleotide sequence ID" value="XM_047440566.1"/>
</dbReference>
<dbReference type="BioGRID" id="114107">
    <property type="interactions" value="9"/>
</dbReference>
<dbReference type="FunCoup" id="O75363">
    <property type="interactions" value="144"/>
</dbReference>
<dbReference type="IntAct" id="O75363">
    <property type="interactions" value="4"/>
</dbReference>
<dbReference type="MINT" id="O75363"/>
<dbReference type="STRING" id="9606.ENSP00000379290"/>
<dbReference type="GlyGen" id="O75363">
    <property type="glycosylation" value="2 sites, 1 O-linked glycan (1 site)"/>
</dbReference>
<dbReference type="iPTMnet" id="O75363"/>
<dbReference type="PhosphoSitePlus" id="O75363"/>
<dbReference type="BioMuta" id="BCAS1"/>
<dbReference type="jPOST" id="O75363"/>
<dbReference type="MassIVE" id="O75363"/>
<dbReference type="PaxDb" id="9606-ENSP00000379290"/>
<dbReference type="PeptideAtlas" id="O75363"/>
<dbReference type="ProteomicsDB" id="49926">
    <molecule id="O75363-1"/>
</dbReference>
<dbReference type="ProteomicsDB" id="49927">
    <molecule id="O75363-2"/>
</dbReference>
<dbReference type="Antibodypedia" id="28750">
    <property type="antibodies" value="175 antibodies from 26 providers"/>
</dbReference>
<dbReference type="DNASU" id="8537"/>
<dbReference type="Ensembl" id="ENST00000395961.7">
    <molecule id="O75363-1"/>
    <property type="protein sequence ID" value="ENSP00000379290.3"/>
    <property type="gene ID" value="ENSG00000064787.14"/>
</dbReference>
<dbReference type="GeneID" id="8537"/>
<dbReference type="KEGG" id="hsa:8537"/>
<dbReference type="UCSC" id="uc002xws.3">
    <molecule id="O75363-1"/>
    <property type="organism name" value="human"/>
</dbReference>
<dbReference type="AGR" id="HGNC:974"/>
<dbReference type="CTD" id="8537"/>
<dbReference type="DisGeNET" id="8537"/>
<dbReference type="GeneCards" id="BCAS1"/>
<dbReference type="HGNC" id="HGNC:974">
    <property type="gene designation" value="BCAS1"/>
</dbReference>
<dbReference type="HPA" id="ENSG00000064787">
    <property type="expression patterns" value="Tissue enriched (brain)"/>
</dbReference>
<dbReference type="MIM" id="602968">
    <property type="type" value="gene"/>
</dbReference>
<dbReference type="neXtProt" id="NX_O75363"/>
<dbReference type="OpenTargets" id="ENSG00000064787"/>
<dbReference type="PharmGKB" id="PA25284"/>
<dbReference type="VEuPathDB" id="HostDB:ENSG00000064787"/>
<dbReference type="eggNOG" id="ENOG502QTR2">
    <property type="taxonomic scope" value="Eukaryota"/>
</dbReference>
<dbReference type="GeneTree" id="ENSGT00390000003167"/>
<dbReference type="HOGENOM" id="CLU_031051_0_0_1"/>
<dbReference type="InParanoid" id="O75363"/>
<dbReference type="OMA" id="SASVPHH"/>
<dbReference type="OrthoDB" id="8962384at2759"/>
<dbReference type="PAN-GO" id="O75363">
    <property type="GO annotations" value="1 GO annotation based on evolutionary models"/>
</dbReference>
<dbReference type="PhylomeDB" id="O75363"/>
<dbReference type="TreeFam" id="TF335555"/>
<dbReference type="PathwayCommons" id="O75363"/>
<dbReference type="SignaLink" id="O75363"/>
<dbReference type="BioGRID-ORCS" id="8537">
    <property type="hits" value="9 hits in 1140 CRISPR screens"/>
</dbReference>
<dbReference type="CD-CODE" id="FB4E32DD">
    <property type="entry name" value="Presynaptic clusters and postsynaptic densities"/>
</dbReference>
<dbReference type="ChiTaRS" id="BCAS1">
    <property type="organism name" value="human"/>
</dbReference>
<dbReference type="GeneWiki" id="BCAS1"/>
<dbReference type="GenomeRNAi" id="8537"/>
<dbReference type="Pharos" id="O75363">
    <property type="development level" value="Tbio"/>
</dbReference>
<dbReference type="PRO" id="PR:O75363"/>
<dbReference type="Proteomes" id="UP000005640">
    <property type="component" value="Chromosome 20"/>
</dbReference>
<dbReference type="RNAct" id="O75363">
    <property type="molecule type" value="protein"/>
</dbReference>
<dbReference type="Bgee" id="ENSG00000064787">
    <property type="expression patterns" value="Expressed in C1 segment of cervical spinal cord and 177 other cell types or tissues"/>
</dbReference>
<dbReference type="ExpressionAtlas" id="O75363">
    <property type="expression patterns" value="baseline and differential"/>
</dbReference>
<dbReference type="GO" id="GO:0005737">
    <property type="term" value="C:cytoplasm"/>
    <property type="evidence" value="ECO:0000250"/>
    <property type="project" value="UniProtKB"/>
</dbReference>
<dbReference type="GO" id="GO:0070062">
    <property type="term" value="C:extracellular exosome"/>
    <property type="evidence" value="ECO:0007005"/>
    <property type="project" value="UniProtKB"/>
</dbReference>
<dbReference type="GO" id="GO:0042552">
    <property type="term" value="P:myelination"/>
    <property type="evidence" value="ECO:0000250"/>
    <property type="project" value="UniProtKB"/>
</dbReference>
<dbReference type="InterPro" id="IPR026115">
    <property type="entry name" value="NABC1"/>
</dbReference>
<dbReference type="PANTHER" id="PTHR15016">
    <property type="entry name" value="BREAST CARCINOMA-AMPLIFIED SEQUENCE 1"/>
    <property type="match status" value="1"/>
</dbReference>
<dbReference type="PANTHER" id="PTHR15016:SF6">
    <property type="entry name" value="BREAST CARCINOMA-AMPLIFIED SEQUENCE 1"/>
    <property type="match status" value="1"/>
</dbReference>
<reference key="1">
    <citation type="journal article" date="1998" name="Proc. Natl. Acad. Sci. U.S.A.">
        <title>Positional cloning of ZNF217 and NABC1: genes amplified at 20q13.2 and overexpressed in breast carcinoma.</title>
        <authorList>
            <person name="Collins C."/>
            <person name="Rommens J.M."/>
            <person name="Kowbel D."/>
            <person name="Godfrey T."/>
            <person name="Tanner M."/>
            <person name="Hwang S.-I."/>
            <person name="Polikoff D."/>
            <person name="Nonet G."/>
            <person name="Cochran J."/>
            <person name="Myambo K."/>
            <person name="Jay K.E."/>
            <person name="Froula J."/>
            <person name="Cloutier T."/>
            <person name="Kuo W.-L."/>
            <person name="Yaswen P."/>
            <person name="Dairkee S."/>
            <person name="Giovanola J."/>
            <person name="Hutchinson G.B."/>
            <person name="Isola J."/>
            <person name="Kallioniemi O.-P."/>
            <person name="Palazzolo M."/>
            <person name="Martin C."/>
            <person name="Ericsson C."/>
            <person name="Pinkel D."/>
            <person name="Albertson D."/>
            <person name="Li W.-B."/>
            <person name="Gray J.W."/>
        </authorList>
    </citation>
    <scope>NUCLEOTIDE SEQUENCE [MRNA] (ISOFORM 1)</scope>
    <scope>VARIANT PRO-583</scope>
</reference>
<reference key="2">
    <citation type="journal article" date="2001" name="Nature">
        <title>The DNA sequence and comparative analysis of human chromosome 20.</title>
        <authorList>
            <person name="Deloukas P."/>
            <person name="Matthews L.H."/>
            <person name="Ashurst J.L."/>
            <person name="Burton J."/>
            <person name="Gilbert J.G.R."/>
            <person name="Jones M."/>
            <person name="Stavrides G."/>
            <person name="Almeida J.P."/>
            <person name="Babbage A.K."/>
            <person name="Bagguley C.L."/>
            <person name="Bailey J."/>
            <person name="Barlow K.F."/>
            <person name="Bates K.N."/>
            <person name="Beard L.M."/>
            <person name="Beare D.M."/>
            <person name="Beasley O.P."/>
            <person name="Bird C.P."/>
            <person name="Blakey S.E."/>
            <person name="Bridgeman A.M."/>
            <person name="Brown A.J."/>
            <person name="Buck D."/>
            <person name="Burrill W.D."/>
            <person name="Butler A.P."/>
            <person name="Carder C."/>
            <person name="Carter N.P."/>
            <person name="Chapman J.C."/>
            <person name="Clamp M."/>
            <person name="Clark G."/>
            <person name="Clark L.N."/>
            <person name="Clark S.Y."/>
            <person name="Clee C.M."/>
            <person name="Clegg S."/>
            <person name="Cobley V.E."/>
            <person name="Collier R.E."/>
            <person name="Connor R.E."/>
            <person name="Corby N.R."/>
            <person name="Coulson A."/>
            <person name="Coville G.J."/>
            <person name="Deadman R."/>
            <person name="Dhami P.D."/>
            <person name="Dunn M."/>
            <person name="Ellington A.G."/>
            <person name="Frankland J.A."/>
            <person name="Fraser A."/>
            <person name="French L."/>
            <person name="Garner P."/>
            <person name="Grafham D.V."/>
            <person name="Griffiths C."/>
            <person name="Griffiths M.N.D."/>
            <person name="Gwilliam R."/>
            <person name="Hall R.E."/>
            <person name="Hammond S."/>
            <person name="Harley J.L."/>
            <person name="Heath P.D."/>
            <person name="Ho S."/>
            <person name="Holden J.L."/>
            <person name="Howden P.J."/>
            <person name="Huckle E."/>
            <person name="Hunt A.R."/>
            <person name="Hunt S.E."/>
            <person name="Jekosch K."/>
            <person name="Johnson C.M."/>
            <person name="Johnson D."/>
            <person name="Kay M.P."/>
            <person name="Kimberley A.M."/>
            <person name="King A."/>
            <person name="Knights A."/>
            <person name="Laird G.K."/>
            <person name="Lawlor S."/>
            <person name="Lehvaeslaiho M.H."/>
            <person name="Leversha M.A."/>
            <person name="Lloyd C."/>
            <person name="Lloyd D.M."/>
            <person name="Lovell J.D."/>
            <person name="Marsh V.L."/>
            <person name="Martin S.L."/>
            <person name="McConnachie L.J."/>
            <person name="McLay K."/>
            <person name="McMurray A.A."/>
            <person name="Milne S.A."/>
            <person name="Mistry D."/>
            <person name="Moore M.J.F."/>
            <person name="Mullikin J.C."/>
            <person name="Nickerson T."/>
            <person name="Oliver K."/>
            <person name="Parker A."/>
            <person name="Patel R."/>
            <person name="Pearce T.A.V."/>
            <person name="Peck A.I."/>
            <person name="Phillimore B.J.C.T."/>
            <person name="Prathalingam S.R."/>
            <person name="Plumb R.W."/>
            <person name="Ramsay H."/>
            <person name="Rice C.M."/>
            <person name="Ross M.T."/>
            <person name="Scott C.E."/>
            <person name="Sehra H.K."/>
            <person name="Shownkeen R."/>
            <person name="Sims S."/>
            <person name="Skuce C.D."/>
            <person name="Smith M.L."/>
            <person name="Soderlund C."/>
            <person name="Steward C.A."/>
            <person name="Sulston J.E."/>
            <person name="Swann R.M."/>
            <person name="Sycamore N."/>
            <person name="Taylor R."/>
            <person name="Tee L."/>
            <person name="Thomas D.W."/>
            <person name="Thorpe A."/>
            <person name="Tracey A."/>
            <person name="Tromans A.C."/>
            <person name="Vaudin M."/>
            <person name="Wall M."/>
            <person name="Wallis J.M."/>
            <person name="Whitehead S.L."/>
            <person name="Whittaker P."/>
            <person name="Willey D.L."/>
            <person name="Williams L."/>
            <person name="Williams S.A."/>
            <person name="Wilming L."/>
            <person name="Wray P.W."/>
            <person name="Hubbard T."/>
            <person name="Durbin R.M."/>
            <person name="Bentley D.R."/>
            <person name="Beck S."/>
            <person name="Rogers J."/>
        </authorList>
    </citation>
    <scope>NUCLEOTIDE SEQUENCE [LARGE SCALE GENOMIC DNA]</scope>
</reference>
<reference key="3">
    <citation type="journal article" date="2004" name="Genome Res.">
        <title>The status, quality, and expansion of the NIH full-length cDNA project: the Mammalian Gene Collection (MGC).</title>
        <authorList>
            <consortium name="The MGC Project Team"/>
        </authorList>
    </citation>
    <scope>NUCLEOTIDE SEQUENCE [LARGE SCALE MRNA] (ISOFORM 1)</scope>
</reference>
<reference key="4">
    <citation type="journal article" date="2000" name="Genomics">
        <title>NABC1 (BCAS1): alternative splicing and downregulation in colorectal tumors.</title>
        <authorList>
            <person name="Correa R.G."/>
            <person name="de Carvalho A.F."/>
            <person name="Pinheiro N.A."/>
            <person name="Simpson A.J.G."/>
            <person name="de Souza S.J."/>
        </authorList>
    </citation>
    <scope>NUCLEOTIDE SEQUENCE [MRNA] OF 264-330 (ISOFORM 2)</scope>
    <scope>TISSUE SPECIFICITY</scope>
</reference>
<reference key="5">
    <citation type="journal article" date="2007" name="BMC Genomics">
        <title>The full-ORF clone resource of the German cDNA consortium.</title>
        <authorList>
            <person name="Bechtel S."/>
            <person name="Rosenfelder H."/>
            <person name="Duda A."/>
            <person name="Schmidt C.P."/>
            <person name="Ernst U."/>
            <person name="Wellenreuther R."/>
            <person name="Mehrle A."/>
            <person name="Schuster C."/>
            <person name="Bahr A."/>
            <person name="Bloecker H."/>
            <person name="Heubner D."/>
            <person name="Hoerlein A."/>
            <person name="Michel G."/>
            <person name="Wedler H."/>
            <person name="Koehrer K."/>
            <person name="Ottenwaelder B."/>
            <person name="Poustka A."/>
            <person name="Wiemann S."/>
            <person name="Schupp I."/>
        </authorList>
    </citation>
    <scope>NUCLEOTIDE SEQUENCE [LARGE SCALE MRNA] OF 275-584 (ISOFORM 2)</scope>
    <source>
        <tissue>Amygdala</tissue>
    </source>
</reference>
<reference key="6">
    <citation type="journal article" date="2003" name="Exp. Cell Res.">
        <title>Characterization of the novel amplified in breast cancer-1 (NABC1) gene product.</title>
        <authorList>
            <person name="Beardsley D.I."/>
            <person name="Kowbel D."/>
            <person name="Lataxes T.A."/>
            <person name="Mannino J.M."/>
            <person name="Xin H."/>
            <person name="Kim W.-J."/>
            <person name="Collins C."/>
            <person name="Brown K.D."/>
        </authorList>
    </citation>
    <scope>SUBUNIT</scope>
    <scope>TISSUE SPECIFICITY</scope>
    <scope>SUBCELLULAR LOCATION</scope>
</reference>
<reference key="7">
    <citation type="journal article" date="2017" name="Sci. Transl. Med.">
        <title>BCAS1 expression defines a population of early myelinating oligodendrocytes in multiple sclerosis lesions.</title>
        <authorList>
            <person name="Fard M.K."/>
            <person name="van der Meer F."/>
            <person name="Sanchez P."/>
            <person name="Cantuti-Castelvetri L."/>
            <person name="Mandad S."/>
            <person name="Jaekel S."/>
            <person name="Fornasiero E.F."/>
            <person name="Schmitt S."/>
            <person name="Ehrlich M."/>
            <person name="Starost L."/>
            <person name="Kuhlmann T."/>
            <person name="Sergiou C."/>
            <person name="Schultz V."/>
            <person name="Wrzos C."/>
            <person name="Brueck W."/>
            <person name="Urlaub H."/>
            <person name="Dimou L."/>
            <person name="Stadelmann C."/>
            <person name="Simons M."/>
        </authorList>
    </citation>
    <scope>TISSUE SPECIFICITY</scope>
</reference>
<evidence type="ECO:0000250" key="1">
    <source>
        <dbReference type="UniProtKB" id="Q3ZB98"/>
    </source>
</evidence>
<evidence type="ECO:0000250" key="2">
    <source>
        <dbReference type="UniProtKB" id="Q80YN3"/>
    </source>
</evidence>
<evidence type="ECO:0000256" key="3">
    <source>
        <dbReference type="SAM" id="MobiDB-lite"/>
    </source>
</evidence>
<evidence type="ECO:0000269" key="4">
    <source>
    </source>
</evidence>
<evidence type="ECO:0000269" key="5">
    <source>
    </source>
</evidence>
<evidence type="ECO:0000269" key="6">
    <source>
    </source>
</evidence>
<evidence type="ECO:0000269" key="7">
    <source>
    </source>
</evidence>
<evidence type="ECO:0000303" key="8">
    <source>
    </source>
</evidence>
<evidence type="ECO:0000303" key="9">
    <source>
    </source>
</evidence>
<evidence type="ECO:0000305" key="10"/>
<name>BCAS1_HUMAN</name>
<feature type="chain" id="PRO_0000064859" description="Breast carcinoma-amplified sequence 1">
    <location>
        <begin position="1"/>
        <end position="584"/>
    </location>
</feature>
<feature type="region of interest" description="Disordered" evidence="3">
    <location>
        <begin position="1"/>
        <end position="29"/>
    </location>
</feature>
<feature type="region of interest" description="Disordered" evidence="3">
    <location>
        <begin position="59"/>
        <end position="280"/>
    </location>
</feature>
<feature type="region of interest" description="Disordered" evidence="3">
    <location>
        <begin position="297"/>
        <end position="377"/>
    </location>
</feature>
<feature type="region of interest" description="Disordered" evidence="3">
    <location>
        <begin position="415"/>
        <end position="584"/>
    </location>
</feature>
<feature type="region of interest" description="Interacts with DYNLL1 and DYNLL2" evidence="1">
    <location>
        <begin position="565"/>
        <end position="584"/>
    </location>
</feature>
<feature type="compositionally biased region" description="Polar residues" evidence="3">
    <location>
        <begin position="59"/>
        <end position="69"/>
    </location>
</feature>
<feature type="compositionally biased region" description="Polar residues" evidence="3">
    <location>
        <begin position="112"/>
        <end position="128"/>
    </location>
</feature>
<feature type="compositionally biased region" description="Basic and acidic residues" evidence="3">
    <location>
        <begin position="186"/>
        <end position="226"/>
    </location>
</feature>
<feature type="compositionally biased region" description="Basic and acidic residues" evidence="3">
    <location>
        <begin position="238"/>
        <end position="252"/>
    </location>
</feature>
<feature type="compositionally biased region" description="Basic and acidic residues" evidence="3">
    <location>
        <begin position="300"/>
        <end position="311"/>
    </location>
</feature>
<feature type="compositionally biased region" description="Polar residues" evidence="3">
    <location>
        <begin position="314"/>
        <end position="354"/>
    </location>
</feature>
<feature type="compositionally biased region" description="Basic and acidic residues" evidence="3">
    <location>
        <begin position="357"/>
        <end position="366"/>
    </location>
</feature>
<feature type="compositionally biased region" description="Basic and acidic residues" evidence="3">
    <location>
        <begin position="428"/>
        <end position="439"/>
    </location>
</feature>
<feature type="compositionally biased region" description="Basic and acidic residues" evidence="3">
    <location>
        <begin position="494"/>
        <end position="506"/>
    </location>
</feature>
<feature type="compositionally biased region" description="Polar residues" evidence="3">
    <location>
        <begin position="525"/>
        <end position="540"/>
    </location>
</feature>
<feature type="compositionally biased region" description="Basic and acidic residues" evidence="3">
    <location>
        <begin position="541"/>
        <end position="550"/>
    </location>
</feature>
<feature type="modified residue" description="Phosphoserine" evidence="1">
    <location>
        <position position="124"/>
    </location>
</feature>
<feature type="modified residue" description="Phosphoserine" evidence="1">
    <location>
        <position position="192"/>
    </location>
</feature>
<feature type="modified residue" description="Phosphoserine" evidence="1">
    <location>
        <position position="314"/>
    </location>
</feature>
<feature type="modified residue" description="Phosphoserine" evidence="2">
    <location>
        <position position="381"/>
    </location>
</feature>
<feature type="modified residue" description="Phosphoserine" evidence="2">
    <location>
        <position position="399"/>
    </location>
</feature>
<feature type="modified residue" description="Phosphothreonine" evidence="2">
    <location>
        <position position="480"/>
    </location>
</feature>
<feature type="modified residue" description="Phosphoserine" evidence="1">
    <location>
        <position position="552"/>
    </location>
</feature>
<feature type="splice variant" id="VSP_018520" description="In isoform 2." evidence="8 9">
    <original>T</original>
    <variation>TASKAESVCDGQAGQKTSEIQARGTKKKHLDSPRLGLAFRKFFRHK</variation>
    <location>
        <position position="309"/>
    </location>
</feature>
<feature type="splice variant" id="VSP_018521" description="In isoform 2." evidence="8 9">
    <location>
        <begin position="381"/>
        <end position="394"/>
    </location>
</feature>
<feature type="splice variant" id="VSP_018522" description="In isoform 2." evidence="8 9">
    <location>
        <begin position="451"/>
        <end position="472"/>
    </location>
</feature>
<feature type="splice variant" id="VSP_018523" description="In isoform 2." evidence="8 9">
    <original>K</original>
    <variation>KYTGKCVFSHVKKKWPFQEWSY</variation>
    <location>
        <position position="584"/>
    </location>
</feature>
<feature type="sequence variant" id="VAR_026674" description="In dbSNP:rs394732.">
    <original>Q</original>
    <variation>K</variation>
    <location>
        <position position="24"/>
    </location>
</feature>
<feature type="sequence variant" id="VAR_026675" description="In dbSNP:rs158551.">
    <original>V</original>
    <variation>A</variation>
    <location>
        <position position="163"/>
    </location>
</feature>
<feature type="sequence variant" id="VAR_024251" description="In dbSNP:rs6022903.">
    <original>G</original>
    <variation>E</variation>
    <location>
        <position position="255"/>
    </location>
</feature>
<feature type="sequence variant" id="VAR_050691" description="In dbSNP:rs35575210.">
    <original>Q</original>
    <variation>H</variation>
    <location>
        <position position="472"/>
    </location>
</feature>
<feature type="sequence variant" id="VAR_026676" description="In dbSNP:rs1055246." evidence="7">
    <original>S</original>
    <variation>P</variation>
    <location>
        <position position="583"/>
    </location>
</feature>
<feature type="sequence conflict" description="In Ref. 5; CAH18437." evidence="10" ref="5">
    <original>G</original>
    <variation>D</variation>
    <location>
        <position position="361"/>
    </location>
</feature>
<sequence>MGNQMSVPQRVEDQENEPEAETYQDNASALNGVPVVVSTHTVQHLEEVDLGISVKTDNVATSSPETTEISAVADANGKNLGKEAKPEAPAAKSRFFLMLSRPVPGRTGDQAADSSLGSVKLDVSSNKAPANKDPSESWTLPVAAGPGQDTDKTPGHAPAQDKVLSAARDPTLLPPETGGAGGEAPSKPKDSSFFDKFFKLDKGQEKVPGDSQQEAKRAEHQDKVDEVPGLSGQSDDVPAGKDIVDGKEKEGQELGTADCSVPGDPEGLETAKDDSQAAAIAENNNSIMSFFKTLVSPNKAETKKDPEDTGAEKSPTTSADLKSDKANFTSQETQGAGKNSKGCNPSGHTQSVTTPEPAKEGTKEKSGPTSLPLGKLFWKKSVKEDSVPTGAEENVVCESPVEIIKSKEVESALQTVDLNEGDAAPEPTEAKLKREESKPRTSLMAFLRQMSVKGDGGITHSEEINGKDSSCQTSDSTEKTITPPEPEPTGAPQKGKEGSSKDKKSAAEMNKQKSNKQEAKEPAQCTEQATVDTNSLQNGDKLQKRPEKRQQSLGGFFKGLGPKRMLDAQVQTDPVSIGPVGKSK</sequence>